<reference key="1">
    <citation type="journal article" date="1993" name="J. Mol. Biol.">
        <title>Crystal structure of canine and bovine granulocyte-colony stimulating factor (G-CSF).</title>
        <authorList>
            <person name="Lovejoy B."/>
            <person name="Cascio D."/>
            <person name="Eisenberg D."/>
        </authorList>
    </citation>
    <scope>X-RAY CRYSTALLOGRAPHY (2.2 ANGSTROMS)</scope>
</reference>
<evidence type="ECO:0000250" key="1"/>
<evidence type="ECO:0000305" key="2"/>
<evidence type="ECO:0007829" key="3">
    <source>
        <dbReference type="PDB" id="1BGE"/>
    </source>
</evidence>
<proteinExistence type="evidence at protein level"/>
<name>CSF3_CANLF</name>
<gene>
    <name type="primary">CSF3</name>
</gene>
<protein>
    <recommendedName>
        <fullName>Granulocyte colony-stimulating factor</fullName>
        <shortName>G-CSF</shortName>
    </recommendedName>
</protein>
<accession>P35834</accession>
<feature type="chain" id="PRO_0000058759" description="Granulocyte colony-stimulating factor">
    <location>
        <begin position="1"/>
        <end position="175"/>
    </location>
</feature>
<feature type="glycosylation site" description="O-linked (GalNAc...) threonine" evidence="1">
    <location>
        <position position="134"/>
    </location>
</feature>
<feature type="disulfide bond">
    <location>
        <begin position="37"/>
        <end position="43"/>
    </location>
</feature>
<feature type="disulfide bond">
    <location>
        <begin position="65"/>
        <end position="75"/>
    </location>
</feature>
<feature type="helix" evidence="3">
    <location>
        <begin position="12"/>
        <end position="39"/>
    </location>
</feature>
<feature type="helix" evidence="3">
    <location>
        <begin position="45"/>
        <end position="55"/>
    </location>
</feature>
<feature type="helix" evidence="3">
    <location>
        <begin position="63"/>
        <end position="65"/>
    </location>
</feature>
<feature type="turn" evidence="3">
    <location>
        <begin position="67"/>
        <end position="69"/>
    </location>
</feature>
<feature type="helix" evidence="3">
    <location>
        <begin position="72"/>
        <end position="92"/>
    </location>
</feature>
<feature type="turn" evidence="3">
    <location>
        <begin position="93"/>
        <end position="95"/>
    </location>
</feature>
<feature type="turn" evidence="3">
    <location>
        <begin position="98"/>
        <end position="100"/>
    </location>
</feature>
<feature type="helix" evidence="3">
    <location>
        <begin position="101"/>
        <end position="125"/>
    </location>
</feature>
<feature type="helix" evidence="3">
    <location>
        <begin position="144"/>
        <end position="171"/>
    </location>
</feature>
<comment type="function">
    <text>Granulocyte/macrophage colony-stimulating factors are cytokines that act in hematopoiesis by controlling the production, differentiation, and function of 2 related white cell populations of the blood, the granulocytes and the monocytes-macrophages. This CSF induces granulocytes.</text>
</comment>
<comment type="subunit">
    <text>Monomer.</text>
</comment>
<comment type="subcellular location">
    <subcellularLocation>
        <location>Secreted</location>
    </subcellularLocation>
</comment>
<comment type="PTM">
    <text>O-glycosylated.</text>
</comment>
<comment type="similarity">
    <text evidence="2">Belongs to the IL-6 superfamily.</text>
</comment>
<dbReference type="PDB" id="1BGD">
    <property type="method" value="X-ray"/>
    <property type="resolution" value="2.30 A"/>
    <property type="chains" value="A=1-175"/>
</dbReference>
<dbReference type="PDB" id="1BGE">
    <property type="method" value="X-ray"/>
    <property type="resolution" value="2.20 A"/>
    <property type="chains" value="A/B=1-175"/>
</dbReference>
<dbReference type="PDBsum" id="1BGD"/>
<dbReference type="PDBsum" id="1BGE"/>
<dbReference type="SMR" id="P35834"/>
<dbReference type="FunCoup" id="P35834">
    <property type="interactions" value="3"/>
</dbReference>
<dbReference type="STRING" id="9615.ENSCAFP00000063922"/>
<dbReference type="GlyCosmos" id="P35834">
    <property type="glycosylation" value="1 site, No reported glycans"/>
</dbReference>
<dbReference type="PaxDb" id="9612-ENSCAFP00000023945"/>
<dbReference type="eggNOG" id="ENOG502SCNA">
    <property type="taxonomic scope" value="Eukaryota"/>
</dbReference>
<dbReference type="InParanoid" id="P35834"/>
<dbReference type="OrthoDB" id="9896489at2759"/>
<dbReference type="EvolutionaryTrace" id="P35834"/>
<dbReference type="Proteomes" id="UP000002254">
    <property type="component" value="Unplaced"/>
</dbReference>
<dbReference type="Proteomes" id="UP000694429">
    <property type="component" value="Unplaced"/>
</dbReference>
<dbReference type="Proteomes" id="UP000694542">
    <property type="component" value="Unplaced"/>
</dbReference>
<dbReference type="Proteomes" id="UP000805418">
    <property type="component" value="Unplaced"/>
</dbReference>
<dbReference type="GO" id="GO:0005615">
    <property type="term" value="C:extracellular space"/>
    <property type="evidence" value="ECO:0000318"/>
    <property type="project" value="GO_Central"/>
</dbReference>
<dbReference type="GO" id="GO:0005125">
    <property type="term" value="F:cytokine activity"/>
    <property type="evidence" value="ECO:0000318"/>
    <property type="project" value="GO_Central"/>
</dbReference>
<dbReference type="GO" id="GO:0005130">
    <property type="term" value="F:granulocyte colony-stimulating factor receptor binding"/>
    <property type="evidence" value="ECO:0000318"/>
    <property type="project" value="GO_Central"/>
</dbReference>
<dbReference type="GO" id="GO:0008083">
    <property type="term" value="F:growth factor activity"/>
    <property type="evidence" value="ECO:0000318"/>
    <property type="project" value="GO_Central"/>
</dbReference>
<dbReference type="GO" id="GO:0006955">
    <property type="term" value="P:immune response"/>
    <property type="evidence" value="ECO:0007669"/>
    <property type="project" value="InterPro"/>
</dbReference>
<dbReference type="GO" id="GO:0008284">
    <property type="term" value="P:positive regulation of cell population proliferation"/>
    <property type="evidence" value="ECO:0000318"/>
    <property type="project" value="GO_Central"/>
</dbReference>
<dbReference type="GO" id="GO:0045639">
    <property type="term" value="P:positive regulation of myeloid cell differentiation"/>
    <property type="evidence" value="ECO:0000318"/>
    <property type="project" value="GO_Central"/>
</dbReference>
<dbReference type="FunFam" id="1.20.1250.10:FF:000021">
    <property type="entry name" value="Granulocyte colony-stimulating factor"/>
    <property type="match status" value="1"/>
</dbReference>
<dbReference type="Gene3D" id="1.20.1250.10">
    <property type="match status" value="1"/>
</dbReference>
<dbReference type="InterPro" id="IPR009079">
    <property type="entry name" value="4_helix_cytokine-like_core"/>
</dbReference>
<dbReference type="InterPro" id="IPR040117">
    <property type="entry name" value="GCSF/MGF"/>
</dbReference>
<dbReference type="InterPro" id="IPR030474">
    <property type="entry name" value="IL-6/GCSF/MGF"/>
</dbReference>
<dbReference type="InterPro" id="IPR030473">
    <property type="entry name" value="IL6/GCSF/MGF_CS"/>
</dbReference>
<dbReference type="PANTHER" id="PTHR10511">
    <property type="entry name" value="GRANULOCYTE COLONY-STIMULATING FACTOR"/>
    <property type="match status" value="1"/>
</dbReference>
<dbReference type="PANTHER" id="PTHR10511:SF2">
    <property type="entry name" value="GRANULOCYTE COLONY-STIMULATING FACTOR"/>
    <property type="match status" value="1"/>
</dbReference>
<dbReference type="Pfam" id="PF16647">
    <property type="entry name" value="GCSF"/>
    <property type="match status" value="1"/>
</dbReference>
<dbReference type="PRINTS" id="PR00433">
    <property type="entry name" value="IL6GCSFMGF"/>
</dbReference>
<dbReference type="SMART" id="SM00126">
    <property type="entry name" value="IL6"/>
    <property type="match status" value="1"/>
</dbReference>
<dbReference type="SUPFAM" id="SSF47266">
    <property type="entry name" value="4-helical cytokines"/>
    <property type="match status" value="1"/>
</dbReference>
<dbReference type="PROSITE" id="PS00254">
    <property type="entry name" value="INTERLEUKIN_6"/>
    <property type="match status" value="1"/>
</dbReference>
<organism>
    <name type="scientific">Canis lupus familiaris</name>
    <name type="common">Dog</name>
    <name type="synonym">Canis familiaris</name>
    <dbReference type="NCBI Taxonomy" id="9615"/>
    <lineage>
        <taxon>Eukaryota</taxon>
        <taxon>Metazoa</taxon>
        <taxon>Chordata</taxon>
        <taxon>Craniata</taxon>
        <taxon>Vertebrata</taxon>
        <taxon>Euteleostomi</taxon>
        <taxon>Mammalia</taxon>
        <taxon>Eutheria</taxon>
        <taxon>Laurasiatheria</taxon>
        <taxon>Carnivora</taxon>
        <taxon>Caniformia</taxon>
        <taxon>Canidae</taxon>
        <taxon>Canis</taxon>
    </lineage>
</organism>
<sequence>MAPLGPTGPLPQSFLLKCLEQMRKVQADGTALQETLCATHQLCHPEELVLLGHALGIPQPPLSSCSSQALQLMGCLRQLHSGLFLYQGLLQALAGISPELAPTLDTLQLDTTDFAINIWQQMEDLGMAPAVPPTQGTMPAFTSAFQRRAGGVLVASNLQSFLELAYRALRHFAKP</sequence>
<keyword id="KW-0002">3D-structure</keyword>
<keyword id="KW-0202">Cytokine</keyword>
<keyword id="KW-1015">Disulfide bond</keyword>
<keyword id="KW-0325">Glycoprotein</keyword>
<keyword id="KW-0339">Growth factor</keyword>
<keyword id="KW-1185">Reference proteome</keyword>
<keyword id="KW-0964">Secreted</keyword>